<sequence>MGFASASREEKLKMMKTNKTRKTTKNLNRLAKKKKLSREIRDGMSDIKARKSADLRQRAVNIEDDFIADREARYENDDEEDLPLDMMDADIDWENSAFANAKRRLDRKRNGGADSDEDEDEDDVETKKRKFAGQLEEGHEELLPIKLKDGTLIRPTREKEVEEQEEEEKSDIDEGEEDEPHKEDFSHLSASELITKRRELLQEFKDTIASHANMLLANPQVNIVRLRDLYNLCNGEKVHSLVREPVQKLAMASTLQVLLDIVPGYAIREQTAEEKSQKQKKETRNLVNFEESLLRYHLKYLQLCEKLSNKLVGKDRHNDENTFTFKMGILSVKALARIVISAPHFNYSTNIISSLVRLSLAKNETVVKEVCDAIRTVFKELHLKITLFTSRSISTLVTKRKGRVSPELLKTLLSMNITEVANEDKKSGKDALIAKKYQIKKERASKTAKKYKKQLARLEADLLEVEAEESLTKKMKHATEAMKFAFQTYFSVLKRMPSSALLEPVLEGLSKFAHLLSIEFYEDIVSTMENMVQNENLKPLDQLHCINTVFVILSGDGQLLNIDPSKFYRLAYRVLNHFPFEKRPEQRKNQIVMAAKTLETMLVTRRKAVPLSRVAAFVKRLLSIATVLDDFPALCIVSLVRSLFIAHPKLSSMIEDEEGGAPGVFRQDIDDPDVANALASDVRDELSMLARRRNVELSRFANNILYGVPSTGIFKLNPQLSSLKPWILMGQLTDNAKEAYDRVETKYLDELEKTAKKRNQTVTPKNINFHISNWLTVAK</sequence>
<organism>
    <name type="scientific">Caenorhabditis briggsae</name>
    <dbReference type="NCBI Taxonomy" id="6238"/>
    <lineage>
        <taxon>Eukaryota</taxon>
        <taxon>Metazoa</taxon>
        <taxon>Ecdysozoa</taxon>
        <taxon>Nematoda</taxon>
        <taxon>Chromadorea</taxon>
        <taxon>Rhabditida</taxon>
        <taxon>Rhabditina</taxon>
        <taxon>Rhabditomorpha</taxon>
        <taxon>Rhabditoidea</taxon>
        <taxon>Rhabditidae</taxon>
        <taxon>Peloderinae</taxon>
        <taxon>Caenorhabditis</taxon>
    </lineage>
</organism>
<proteinExistence type="inferred from homology"/>
<reference key="1">
    <citation type="journal article" date="2003" name="PLoS Biol.">
        <title>The genome sequence of Caenorhabditis briggsae: a platform for comparative genomics.</title>
        <authorList>
            <person name="Stein L.D."/>
            <person name="Bao Z."/>
            <person name="Blasiar D."/>
            <person name="Blumenthal T."/>
            <person name="Brent M.R."/>
            <person name="Chen N."/>
            <person name="Chinwalla A."/>
            <person name="Clarke L."/>
            <person name="Clee C."/>
            <person name="Coghlan A."/>
            <person name="Coulson A."/>
            <person name="D'Eustachio P."/>
            <person name="Fitch D.H.A."/>
            <person name="Fulton L.A."/>
            <person name="Fulton R.E."/>
            <person name="Griffiths-Jones S."/>
            <person name="Harris T.W."/>
            <person name="Hillier L.W."/>
            <person name="Kamath R."/>
            <person name="Kuwabara P.E."/>
            <person name="Mardis E.R."/>
            <person name="Marra M.A."/>
            <person name="Miner T.L."/>
            <person name="Minx P."/>
            <person name="Mullikin J.C."/>
            <person name="Plumb R.W."/>
            <person name="Rogers J."/>
            <person name="Schein J.E."/>
            <person name="Sohrmann M."/>
            <person name="Spieth J."/>
            <person name="Stajich J.E."/>
            <person name="Wei C."/>
            <person name="Willey D."/>
            <person name="Wilson R.K."/>
            <person name="Durbin R.M."/>
            <person name="Waterston R.H."/>
        </authorList>
    </citation>
    <scope>NUCLEOTIDE SEQUENCE [LARGE SCALE GENOMIC DNA]</scope>
    <source>
        <strain>AF16</strain>
    </source>
</reference>
<name>NOC3L_CAEBR</name>
<comment type="subcellular location">
    <subcellularLocation>
        <location evidence="1">Nucleus</location>
        <location evidence="1">Nucleolus</location>
    </subcellularLocation>
</comment>
<comment type="similarity">
    <text evidence="4">Belongs to the CBF/MAK21 family.</text>
</comment>
<protein>
    <recommendedName>
        <fullName>Nucleolar complex protein 3 homolog</fullName>
        <shortName>NOC3 protein homolog</shortName>
    </recommendedName>
    <alternativeName>
        <fullName>NOC3-like protein</fullName>
    </alternativeName>
    <alternativeName>
        <fullName>Nucleolar complex-associated protein 3-like protein</fullName>
    </alternativeName>
</protein>
<accession>Q61LN7</accession>
<accession>A8X7H3</accession>
<dbReference type="EMBL" id="HE601187">
    <property type="protein sequence ID" value="CAP28584.3"/>
    <property type="molecule type" value="Genomic_DNA"/>
</dbReference>
<dbReference type="RefSeq" id="XP_002635520.1">
    <property type="nucleotide sequence ID" value="XM_002635474.1"/>
</dbReference>
<dbReference type="SMR" id="Q61LN7"/>
<dbReference type="FunCoup" id="Q61LN7">
    <property type="interactions" value="2642"/>
</dbReference>
<dbReference type="STRING" id="6238.Q61LN7"/>
<dbReference type="EnsemblMetazoa" id="CBG08826.1">
    <property type="protein sequence ID" value="CBG08826.1"/>
    <property type="gene ID" value="WBGene00030551"/>
</dbReference>
<dbReference type="GeneID" id="8577515"/>
<dbReference type="KEGG" id="cbr:CBG_08826"/>
<dbReference type="CTD" id="8577515"/>
<dbReference type="WormBase" id="CBG08826">
    <property type="protein sequence ID" value="CBP02186"/>
    <property type="gene ID" value="WBGene00030551"/>
</dbReference>
<dbReference type="eggNOG" id="KOG2153">
    <property type="taxonomic scope" value="Eukaryota"/>
</dbReference>
<dbReference type="HOGENOM" id="CLU_012441_2_1_1"/>
<dbReference type="InParanoid" id="Q61LN7"/>
<dbReference type="OMA" id="HYCPQVR"/>
<dbReference type="Proteomes" id="UP000008549">
    <property type="component" value="Unassembled WGS sequence"/>
</dbReference>
<dbReference type="GO" id="GO:0005730">
    <property type="term" value="C:nucleolus"/>
    <property type="evidence" value="ECO:0000318"/>
    <property type="project" value="GO_Central"/>
</dbReference>
<dbReference type="GO" id="GO:0003682">
    <property type="term" value="F:chromatin binding"/>
    <property type="evidence" value="ECO:0000318"/>
    <property type="project" value="GO_Central"/>
</dbReference>
<dbReference type="GO" id="GO:0006270">
    <property type="term" value="P:DNA replication initiation"/>
    <property type="evidence" value="ECO:0000318"/>
    <property type="project" value="GO_Central"/>
</dbReference>
<dbReference type="InterPro" id="IPR016024">
    <property type="entry name" value="ARM-type_fold"/>
</dbReference>
<dbReference type="InterPro" id="IPR005612">
    <property type="entry name" value="CCAAT-binding_factor"/>
</dbReference>
<dbReference type="InterPro" id="IPR011501">
    <property type="entry name" value="Noc3_N"/>
</dbReference>
<dbReference type="InterPro" id="IPR016903">
    <property type="entry name" value="Nucleolar_cplx-assoc_3"/>
</dbReference>
<dbReference type="PANTHER" id="PTHR14428">
    <property type="entry name" value="NUCLEOLAR COMPLEX PROTEIN 3"/>
    <property type="match status" value="1"/>
</dbReference>
<dbReference type="PANTHER" id="PTHR14428:SF5">
    <property type="entry name" value="NUCLEOLAR COMPLEX PROTEIN 3 HOMOLOG"/>
    <property type="match status" value="1"/>
</dbReference>
<dbReference type="Pfam" id="PF03914">
    <property type="entry name" value="CBF"/>
    <property type="match status" value="1"/>
</dbReference>
<dbReference type="Pfam" id="PF07540">
    <property type="entry name" value="NOC3p"/>
    <property type="match status" value="1"/>
</dbReference>
<dbReference type="PIRSF" id="PIRSF028977">
    <property type="entry name" value="Nucleolar_complex_p3"/>
    <property type="match status" value="1"/>
</dbReference>
<dbReference type="SUPFAM" id="SSF48371">
    <property type="entry name" value="ARM repeat"/>
    <property type="match status" value="1"/>
</dbReference>
<evidence type="ECO:0000250" key="1"/>
<evidence type="ECO:0000255" key="2"/>
<evidence type="ECO:0000256" key="3">
    <source>
        <dbReference type="SAM" id="MobiDB-lite"/>
    </source>
</evidence>
<evidence type="ECO:0000305" key="4"/>
<feature type="chain" id="PRO_0000173479" description="Nucleolar complex protein 3 homolog">
    <location>
        <begin position="1"/>
        <end position="779"/>
    </location>
</feature>
<feature type="region of interest" description="Disordered" evidence="3">
    <location>
        <begin position="1"/>
        <end position="20"/>
    </location>
</feature>
<feature type="region of interest" description="Disordered" evidence="3">
    <location>
        <begin position="100"/>
        <end position="189"/>
    </location>
</feature>
<feature type="coiled-coil region" evidence="2">
    <location>
        <begin position="434"/>
        <end position="474"/>
    </location>
</feature>
<feature type="compositionally biased region" description="Acidic residues" evidence="3">
    <location>
        <begin position="114"/>
        <end position="124"/>
    </location>
</feature>
<feature type="compositionally biased region" description="Basic and acidic residues" evidence="3">
    <location>
        <begin position="136"/>
        <end position="160"/>
    </location>
</feature>
<feature type="compositionally biased region" description="Acidic residues" evidence="3">
    <location>
        <begin position="161"/>
        <end position="178"/>
    </location>
</feature>
<gene>
    <name type="ORF">CBG08826</name>
</gene>
<keyword id="KW-0175">Coiled coil</keyword>
<keyword id="KW-0539">Nucleus</keyword>
<keyword id="KW-1185">Reference proteome</keyword>